<feature type="chain" id="PRO_0000310030" description="Large ribosomal subunit protein uL2">
    <location>
        <begin position="1"/>
        <end position="275"/>
    </location>
</feature>
<feature type="region of interest" description="Disordered" evidence="2">
    <location>
        <begin position="218"/>
        <end position="275"/>
    </location>
</feature>
<feature type="compositionally biased region" description="Basic residues" evidence="2">
    <location>
        <begin position="257"/>
        <end position="275"/>
    </location>
</feature>
<organism>
    <name type="scientific">Sulfurovum sp. (strain NBC37-1)</name>
    <dbReference type="NCBI Taxonomy" id="387093"/>
    <lineage>
        <taxon>Bacteria</taxon>
        <taxon>Pseudomonadati</taxon>
        <taxon>Campylobacterota</taxon>
        <taxon>Epsilonproteobacteria</taxon>
        <taxon>Campylobacterales</taxon>
        <taxon>Sulfurovaceae</taxon>
        <taxon>Sulfurovum</taxon>
    </lineage>
</organism>
<comment type="function">
    <text evidence="1">One of the primary rRNA binding proteins. Required for association of the 30S and 50S subunits to form the 70S ribosome, for tRNA binding and peptide bond formation. It has been suggested to have peptidyltransferase activity; this is somewhat controversial. Makes several contacts with the 16S rRNA in the 70S ribosome.</text>
</comment>
<comment type="subunit">
    <text evidence="1">Part of the 50S ribosomal subunit. Forms a bridge to the 30S subunit in the 70S ribosome.</text>
</comment>
<comment type="similarity">
    <text evidence="1">Belongs to the universal ribosomal protein uL2 family.</text>
</comment>
<sequence length="275" mass="30162">MAIKTYKPTTPSRRYMTNLDSGDITAKASVRALLKNLPRSAGRNSNGRITSRHREAGAKKLYRIIDFKRNKFGIEGTVATIEYDPYRNCRICLVNYVDGDRRYILQPKGLNVGDKIMSAESGLDIKTGNTMKLKNIPVGTLVHNIELSPGHGGQIARSAGGYAQIMGRDGKYVSLRLPSGEMRYVLGECLATIGTVGNEDFSNIVIGKAGRSRHLGIRPQTRGSAMNPIDHPHGGGEGKTNSGRHPVSPWGMPTKGYKTRKKKASDKLIISKRKK</sequence>
<protein>
    <recommendedName>
        <fullName evidence="1">Large ribosomal subunit protein uL2</fullName>
    </recommendedName>
    <alternativeName>
        <fullName evidence="3">50S ribosomal protein L2</fullName>
    </alternativeName>
</protein>
<accession>A6QCQ1</accession>
<proteinExistence type="inferred from homology"/>
<evidence type="ECO:0000255" key="1">
    <source>
        <dbReference type="HAMAP-Rule" id="MF_01320"/>
    </source>
</evidence>
<evidence type="ECO:0000256" key="2">
    <source>
        <dbReference type="SAM" id="MobiDB-lite"/>
    </source>
</evidence>
<evidence type="ECO:0000305" key="3"/>
<gene>
    <name evidence="1" type="primary">rplB</name>
    <name type="ordered locus">SUN_2324</name>
</gene>
<keyword id="KW-0687">Ribonucleoprotein</keyword>
<keyword id="KW-0689">Ribosomal protein</keyword>
<keyword id="KW-0694">RNA-binding</keyword>
<keyword id="KW-0699">rRNA-binding</keyword>
<dbReference type="EMBL" id="AP009179">
    <property type="protein sequence ID" value="BAF73260.1"/>
    <property type="molecule type" value="Genomic_DNA"/>
</dbReference>
<dbReference type="RefSeq" id="WP_012084099.1">
    <property type="nucleotide sequence ID" value="NC_009663.1"/>
</dbReference>
<dbReference type="SMR" id="A6QCQ1"/>
<dbReference type="STRING" id="387093.SUN_2324"/>
<dbReference type="KEGG" id="sun:SUN_2324"/>
<dbReference type="eggNOG" id="COG0090">
    <property type="taxonomic scope" value="Bacteria"/>
</dbReference>
<dbReference type="HOGENOM" id="CLU_036235_2_1_7"/>
<dbReference type="OrthoDB" id="9778722at2"/>
<dbReference type="Proteomes" id="UP000006378">
    <property type="component" value="Chromosome"/>
</dbReference>
<dbReference type="GO" id="GO:0015934">
    <property type="term" value="C:large ribosomal subunit"/>
    <property type="evidence" value="ECO:0007669"/>
    <property type="project" value="InterPro"/>
</dbReference>
<dbReference type="GO" id="GO:0019843">
    <property type="term" value="F:rRNA binding"/>
    <property type="evidence" value="ECO:0007669"/>
    <property type="project" value="UniProtKB-UniRule"/>
</dbReference>
<dbReference type="GO" id="GO:0003735">
    <property type="term" value="F:structural constituent of ribosome"/>
    <property type="evidence" value="ECO:0007669"/>
    <property type="project" value="InterPro"/>
</dbReference>
<dbReference type="GO" id="GO:0016740">
    <property type="term" value="F:transferase activity"/>
    <property type="evidence" value="ECO:0007669"/>
    <property type="project" value="InterPro"/>
</dbReference>
<dbReference type="GO" id="GO:0002181">
    <property type="term" value="P:cytoplasmic translation"/>
    <property type="evidence" value="ECO:0007669"/>
    <property type="project" value="TreeGrafter"/>
</dbReference>
<dbReference type="FunFam" id="2.30.30.30:FF:000001">
    <property type="entry name" value="50S ribosomal protein L2"/>
    <property type="match status" value="1"/>
</dbReference>
<dbReference type="FunFam" id="2.40.50.140:FF:000003">
    <property type="entry name" value="50S ribosomal protein L2"/>
    <property type="match status" value="1"/>
</dbReference>
<dbReference type="FunFam" id="4.10.950.10:FF:000001">
    <property type="entry name" value="50S ribosomal protein L2"/>
    <property type="match status" value="1"/>
</dbReference>
<dbReference type="Gene3D" id="2.30.30.30">
    <property type="match status" value="1"/>
</dbReference>
<dbReference type="Gene3D" id="2.40.50.140">
    <property type="entry name" value="Nucleic acid-binding proteins"/>
    <property type="match status" value="1"/>
</dbReference>
<dbReference type="Gene3D" id="4.10.950.10">
    <property type="entry name" value="Ribosomal protein L2, domain 3"/>
    <property type="match status" value="1"/>
</dbReference>
<dbReference type="HAMAP" id="MF_01320_B">
    <property type="entry name" value="Ribosomal_uL2_B"/>
    <property type="match status" value="1"/>
</dbReference>
<dbReference type="InterPro" id="IPR012340">
    <property type="entry name" value="NA-bd_OB-fold"/>
</dbReference>
<dbReference type="InterPro" id="IPR014722">
    <property type="entry name" value="Rib_uL2_dom2"/>
</dbReference>
<dbReference type="InterPro" id="IPR002171">
    <property type="entry name" value="Ribosomal_uL2"/>
</dbReference>
<dbReference type="InterPro" id="IPR005880">
    <property type="entry name" value="Ribosomal_uL2_bac/org-type"/>
</dbReference>
<dbReference type="InterPro" id="IPR022669">
    <property type="entry name" value="Ribosomal_uL2_C"/>
</dbReference>
<dbReference type="InterPro" id="IPR022671">
    <property type="entry name" value="Ribosomal_uL2_CS"/>
</dbReference>
<dbReference type="InterPro" id="IPR014726">
    <property type="entry name" value="Ribosomal_uL2_dom3"/>
</dbReference>
<dbReference type="InterPro" id="IPR022666">
    <property type="entry name" value="Ribosomal_uL2_RNA-bd_dom"/>
</dbReference>
<dbReference type="InterPro" id="IPR008991">
    <property type="entry name" value="Translation_prot_SH3-like_sf"/>
</dbReference>
<dbReference type="NCBIfam" id="TIGR01171">
    <property type="entry name" value="rplB_bact"/>
    <property type="match status" value="1"/>
</dbReference>
<dbReference type="PANTHER" id="PTHR13691:SF5">
    <property type="entry name" value="LARGE RIBOSOMAL SUBUNIT PROTEIN UL2M"/>
    <property type="match status" value="1"/>
</dbReference>
<dbReference type="PANTHER" id="PTHR13691">
    <property type="entry name" value="RIBOSOMAL PROTEIN L2"/>
    <property type="match status" value="1"/>
</dbReference>
<dbReference type="Pfam" id="PF00181">
    <property type="entry name" value="Ribosomal_L2"/>
    <property type="match status" value="1"/>
</dbReference>
<dbReference type="Pfam" id="PF03947">
    <property type="entry name" value="Ribosomal_L2_C"/>
    <property type="match status" value="1"/>
</dbReference>
<dbReference type="PIRSF" id="PIRSF002158">
    <property type="entry name" value="Ribosomal_L2"/>
    <property type="match status" value="1"/>
</dbReference>
<dbReference type="SMART" id="SM01383">
    <property type="entry name" value="Ribosomal_L2"/>
    <property type="match status" value="1"/>
</dbReference>
<dbReference type="SMART" id="SM01382">
    <property type="entry name" value="Ribosomal_L2_C"/>
    <property type="match status" value="1"/>
</dbReference>
<dbReference type="SUPFAM" id="SSF50249">
    <property type="entry name" value="Nucleic acid-binding proteins"/>
    <property type="match status" value="1"/>
</dbReference>
<dbReference type="SUPFAM" id="SSF50104">
    <property type="entry name" value="Translation proteins SH3-like domain"/>
    <property type="match status" value="1"/>
</dbReference>
<dbReference type="PROSITE" id="PS00467">
    <property type="entry name" value="RIBOSOMAL_L2"/>
    <property type="match status" value="1"/>
</dbReference>
<name>RL2_SULNB</name>
<reference key="1">
    <citation type="journal article" date="2007" name="Proc. Natl. Acad. Sci. U.S.A.">
        <title>Deep-sea vent epsilon-proteobacterial genomes provide insights into emergence of pathogens.</title>
        <authorList>
            <person name="Nakagawa S."/>
            <person name="Takaki Y."/>
            <person name="Shimamura S."/>
            <person name="Reysenbach A.-L."/>
            <person name="Takai K."/>
            <person name="Horikoshi K."/>
        </authorList>
    </citation>
    <scope>NUCLEOTIDE SEQUENCE [LARGE SCALE GENOMIC DNA]</scope>
    <source>
        <strain>NBC37-1</strain>
    </source>
</reference>